<name>3HID3_ARATH</name>
<reference key="1">
    <citation type="journal article" date="2000" name="Nature">
        <title>Sequence and analysis of chromosome 1 of the plant Arabidopsis thaliana.</title>
        <authorList>
            <person name="Theologis A."/>
            <person name="Ecker J.R."/>
            <person name="Palm C.J."/>
            <person name="Federspiel N.A."/>
            <person name="Kaul S."/>
            <person name="White O."/>
            <person name="Alonso J."/>
            <person name="Altafi H."/>
            <person name="Araujo R."/>
            <person name="Bowman C.L."/>
            <person name="Brooks S.Y."/>
            <person name="Buehler E."/>
            <person name="Chan A."/>
            <person name="Chao Q."/>
            <person name="Chen H."/>
            <person name="Cheuk R.F."/>
            <person name="Chin C.W."/>
            <person name="Chung M.K."/>
            <person name="Conn L."/>
            <person name="Conway A.B."/>
            <person name="Conway A.R."/>
            <person name="Creasy T.H."/>
            <person name="Dewar K."/>
            <person name="Dunn P."/>
            <person name="Etgu P."/>
            <person name="Feldblyum T.V."/>
            <person name="Feng J.-D."/>
            <person name="Fong B."/>
            <person name="Fujii C.Y."/>
            <person name="Gill J.E."/>
            <person name="Goldsmith A.D."/>
            <person name="Haas B."/>
            <person name="Hansen N.F."/>
            <person name="Hughes B."/>
            <person name="Huizar L."/>
            <person name="Hunter J.L."/>
            <person name="Jenkins J."/>
            <person name="Johnson-Hopson C."/>
            <person name="Khan S."/>
            <person name="Khaykin E."/>
            <person name="Kim C.J."/>
            <person name="Koo H.L."/>
            <person name="Kremenetskaia I."/>
            <person name="Kurtz D.B."/>
            <person name="Kwan A."/>
            <person name="Lam B."/>
            <person name="Langin-Hooper S."/>
            <person name="Lee A."/>
            <person name="Lee J.M."/>
            <person name="Lenz C.A."/>
            <person name="Li J.H."/>
            <person name="Li Y.-P."/>
            <person name="Lin X."/>
            <person name="Liu S.X."/>
            <person name="Liu Z.A."/>
            <person name="Luros J.S."/>
            <person name="Maiti R."/>
            <person name="Marziali A."/>
            <person name="Militscher J."/>
            <person name="Miranda M."/>
            <person name="Nguyen M."/>
            <person name="Nierman W.C."/>
            <person name="Osborne B.I."/>
            <person name="Pai G."/>
            <person name="Peterson J."/>
            <person name="Pham P.K."/>
            <person name="Rizzo M."/>
            <person name="Rooney T."/>
            <person name="Rowley D."/>
            <person name="Sakano H."/>
            <person name="Salzberg S.L."/>
            <person name="Schwartz J.R."/>
            <person name="Shinn P."/>
            <person name="Southwick A.M."/>
            <person name="Sun H."/>
            <person name="Tallon L.J."/>
            <person name="Tambunga G."/>
            <person name="Toriumi M.J."/>
            <person name="Town C.D."/>
            <person name="Utterback T."/>
            <person name="Van Aken S."/>
            <person name="Vaysberg M."/>
            <person name="Vysotskaia V.S."/>
            <person name="Walker M."/>
            <person name="Wu D."/>
            <person name="Yu G."/>
            <person name="Fraser C.M."/>
            <person name="Venter J.C."/>
            <person name="Davis R.W."/>
        </authorList>
    </citation>
    <scope>NUCLEOTIDE SEQUENCE [LARGE SCALE GENOMIC DNA]</scope>
    <source>
        <strain>cv. Columbia</strain>
    </source>
</reference>
<reference key="2">
    <citation type="journal article" date="2017" name="Plant J.">
        <title>Araport11: a complete reannotation of the Arabidopsis thaliana reference genome.</title>
        <authorList>
            <person name="Cheng C.Y."/>
            <person name="Krishnakumar V."/>
            <person name="Chan A.P."/>
            <person name="Thibaud-Nissen F."/>
            <person name="Schobel S."/>
            <person name="Town C.D."/>
        </authorList>
    </citation>
    <scope>GENOME REANNOTATION</scope>
    <source>
        <strain>cv. Columbia</strain>
    </source>
</reference>
<reference key="3">
    <citation type="journal article" date="2003" name="Science">
        <title>Empirical analysis of transcriptional activity in the Arabidopsis genome.</title>
        <authorList>
            <person name="Yamada K."/>
            <person name="Lim J."/>
            <person name="Dale J.M."/>
            <person name="Chen H."/>
            <person name="Shinn P."/>
            <person name="Palm C.J."/>
            <person name="Southwick A.M."/>
            <person name="Wu H.C."/>
            <person name="Kim C.J."/>
            <person name="Nguyen M."/>
            <person name="Pham P.K."/>
            <person name="Cheuk R.F."/>
            <person name="Karlin-Newmann G."/>
            <person name="Liu S.X."/>
            <person name="Lam B."/>
            <person name="Sakano H."/>
            <person name="Wu T."/>
            <person name="Yu G."/>
            <person name="Miranda M."/>
            <person name="Quach H.L."/>
            <person name="Tripp M."/>
            <person name="Chang C.H."/>
            <person name="Lee J.M."/>
            <person name="Toriumi M.J."/>
            <person name="Chan M.M."/>
            <person name="Tang C.C."/>
            <person name="Onodera C.S."/>
            <person name="Deng J.M."/>
            <person name="Akiyama K."/>
            <person name="Ansari Y."/>
            <person name="Arakawa T."/>
            <person name="Banh J."/>
            <person name="Banno F."/>
            <person name="Bowser L."/>
            <person name="Brooks S.Y."/>
            <person name="Carninci P."/>
            <person name="Chao Q."/>
            <person name="Choy N."/>
            <person name="Enju A."/>
            <person name="Goldsmith A.D."/>
            <person name="Gurjal M."/>
            <person name="Hansen N.F."/>
            <person name="Hayashizaki Y."/>
            <person name="Johnson-Hopson C."/>
            <person name="Hsuan V.W."/>
            <person name="Iida K."/>
            <person name="Karnes M."/>
            <person name="Khan S."/>
            <person name="Koesema E."/>
            <person name="Ishida J."/>
            <person name="Jiang P.X."/>
            <person name="Jones T."/>
            <person name="Kawai J."/>
            <person name="Kamiya A."/>
            <person name="Meyers C."/>
            <person name="Nakajima M."/>
            <person name="Narusaka M."/>
            <person name="Seki M."/>
            <person name="Sakurai T."/>
            <person name="Satou M."/>
            <person name="Tamse R."/>
            <person name="Vaysberg M."/>
            <person name="Wallender E.K."/>
            <person name="Wong C."/>
            <person name="Yamamura Y."/>
            <person name="Yuan S."/>
            <person name="Shinozaki K."/>
            <person name="Davis R.W."/>
            <person name="Theologis A."/>
            <person name="Ecker J.R."/>
        </authorList>
    </citation>
    <scope>NUCLEOTIDE SEQUENCE [LARGE SCALE MRNA]</scope>
    <source>
        <strain>cv. Columbia</strain>
    </source>
</reference>
<gene>
    <name type="ordered locus">At1g71180</name>
    <name type="ORF">F23N20.17</name>
</gene>
<protein>
    <recommendedName>
        <fullName>Probable 3-hydroxyisobutyrate dehydrogenase-like 3, mitochondrial</fullName>
        <shortName>HIBADH-like</shortName>
        <ecNumber>1.1.1.31</ecNumber>
    </recommendedName>
</protein>
<evidence type="ECO:0000250" key="1"/>
<evidence type="ECO:0000305" key="2"/>
<proteinExistence type="evidence at transcript level"/>
<comment type="catalytic activity">
    <reaction>
        <text>3-hydroxy-2-methylpropanoate + NAD(+) = 2-methyl-3-oxopropanoate + NADH + H(+)</text>
        <dbReference type="Rhea" id="RHEA:17681"/>
        <dbReference type="ChEBI" id="CHEBI:11805"/>
        <dbReference type="ChEBI" id="CHEBI:15378"/>
        <dbReference type="ChEBI" id="CHEBI:57540"/>
        <dbReference type="ChEBI" id="CHEBI:57700"/>
        <dbReference type="ChEBI" id="CHEBI:57945"/>
        <dbReference type="EC" id="1.1.1.31"/>
    </reaction>
</comment>
<comment type="pathway">
    <text>Amino-acid degradation; L-valine degradation.</text>
</comment>
<comment type="subcellular location">
    <subcellularLocation>
        <location evidence="1">Mitochondrion</location>
    </subcellularLocation>
</comment>
<comment type="similarity">
    <text evidence="2">Belongs to the HIBADH-related family. 3-hydroxyisobutyrate dehydrogenase subfamily.</text>
</comment>
<comment type="sequence caution" evidence="2">
    <conflict type="erroneous initiation">
        <sequence resource="EMBL-CDS" id="AAG51699"/>
    </conflict>
    <text>Truncated N-terminus.</text>
</comment>
<feature type="chain" id="PRO_0000421119" description="Probable 3-hydroxyisobutyrate dehydrogenase-like 3, mitochondrial">
    <location>
        <begin position="1"/>
        <end position="318"/>
    </location>
</feature>
<feature type="active site" evidence="1">
    <location>
        <position position="203"/>
    </location>
</feature>
<feature type="binding site" evidence="1">
    <location>
        <begin position="35"/>
        <end position="64"/>
    </location>
    <ligand>
        <name>NAD(+)</name>
        <dbReference type="ChEBI" id="CHEBI:57540"/>
    </ligand>
</feature>
<feature type="binding site" evidence="1">
    <location>
        <position position="129"/>
    </location>
    <ligand>
        <name>NAD(+)</name>
        <dbReference type="ChEBI" id="CHEBI:57540"/>
    </ligand>
</feature>
<feature type="binding site" evidence="1">
    <location>
        <position position="271"/>
    </location>
    <ligand>
        <name>NAD(+)</name>
        <dbReference type="ChEBI" id="CHEBI:57540"/>
    </ligand>
</feature>
<dbReference type="EC" id="1.1.1.31"/>
<dbReference type="EMBL" id="AC016972">
    <property type="protein sequence ID" value="AAG51699.1"/>
    <property type="status" value="ALT_INIT"/>
    <property type="molecule type" value="Genomic_DNA"/>
</dbReference>
<dbReference type="EMBL" id="CP002684">
    <property type="protein sequence ID" value="AEE35169.1"/>
    <property type="molecule type" value="Genomic_DNA"/>
</dbReference>
<dbReference type="EMBL" id="AY051005">
    <property type="protein sequence ID" value="AAK93682.1"/>
    <property type="molecule type" value="mRNA"/>
</dbReference>
<dbReference type="EMBL" id="AY113980">
    <property type="protein sequence ID" value="AAM45028.1"/>
    <property type="molecule type" value="mRNA"/>
</dbReference>
<dbReference type="PIR" id="E96736">
    <property type="entry name" value="E96736"/>
</dbReference>
<dbReference type="RefSeq" id="NP_565014.1">
    <property type="nucleotide sequence ID" value="NM_105787.2"/>
</dbReference>
<dbReference type="SMR" id="Q949M8"/>
<dbReference type="FunCoup" id="Q949M8">
    <property type="interactions" value="55"/>
</dbReference>
<dbReference type="STRING" id="3702.Q949M8"/>
<dbReference type="iPTMnet" id="Q949M8"/>
<dbReference type="PaxDb" id="3702-AT1G71180.1"/>
<dbReference type="ProteomicsDB" id="245156"/>
<dbReference type="EnsemblPlants" id="AT1G71180.1">
    <property type="protein sequence ID" value="AT1G71180.1"/>
    <property type="gene ID" value="AT1G71180"/>
</dbReference>
<dbReference type="GeneID" id="843458"/>
<dbReference type="Gramene" id="AT1G71180.1">
    <property type="protein sequence ID" value="AT1G71180.1"/>
    <property type="gene ID" value="AT1G71180"/>
</dbReference>
<dbReference type="KEGG" id="ath:AT1G71180"/>
<dbReference type="Araport" id="AT1G71180"/>
<dbReference type="TAIR" id="AT1G71180"/>
<dbReference type="eggNOG" id="KOG0409">
    <property type="taxonomic scope" value="Eukaryota"/>
</dbReference>
<dbReference type="HOGENOM" id="CLU_035117_1_0_1"/>
<dbReference type="InParanoid" id="Q949M8"/>
<dbReference type="OMA" id="VWTGEDG"/>
<dbReference type="PhylomeDB" id="Q949M8"/>
<dbReference type="BioCyc" id="ARA:AT1G71180-MONOMER"/>
<dbReference type="UniPathway" id="UPA00362"/>
<dbReference type="PRO" id="PR:Q949M8"/>
<dbReference type="Proteomes" id="UP000006548">
    <property type="component" value="Chromosome 1"/>
</dbReference>
<dbReference type="ExpressionAtlas" id="Q949M8">
    <property type="expression patterns" value="baseline and differential"/>
</dbReference>
<dbReference type="GO" id="GO:0005739">
    <property type="term" value="C:mitochondrion"/>
    <property type="evidence" value="ECO:0007669"/>
    <property type="project" value="UniProtKB-SubCell"/>
</dbReference>
<dbReference type="GO" id="GO:0008442">
    <property type="term" value="F:3-hydroxyisobutyrate dehydrogenase activity"/>
    <property type="evidence" value="ECO:0007669"/>
    <property type="project" value="UniProtKB-EC"/>
</dbReference>
<dbReference type="GO" id="GO:0051287">
    <property type="term" value="F:NAD binding"/>
    <property type="evidence" value="ECO:0007669"/>
    <property type="project" value="InterPro"/>
</dbReference>
<dbReference type="GO" id="GO:0050661">
    <property type="term" value="F:NADP binding"/>
    <property type="evidence" value="ECO:0007669"/>
    <property type="project" value="InterPro"/>
</dbReference>
<dbReference type="GO" id="GO:0006574">
    <property type="term" value="P:valine catabolic process"/>
    <property type="evidence" value="ECO:0007669"/>
    <property type="project" value="UniProtKB-UniPathway"/>
</dbReference>
<dbReference type="Gene3D" id="1.10.1040.10">
    <property type="entry name" value="N-(1-d-carboxylethyl)-l-norvaline Dehydrogenase, domain 2"/>
    <property type="match status" value="1"/>
</dbReference>
<dbReference type="Gene3D" id="3.40.50.720">
    <property type="entry name" value="NAD(P)-binding Rossmann-like Domain"/>
    <property type="match status" value="1"/>
</dbReference>
<dbReference type="InterPro" id="IPR008927">
    <property type="entry name" value="6-PGluconate_DH-like_C_sf"/>
</dbReference>
<dbReference type="InterPro" id="IPR013328">
    <property type="entry name" value="6PGD_dom2"/>
</dbReference>
<dbReference type="InterPro" id="IPR006115">
    <property type="entry name" value="6PGDH_NADP-bd"/>
</dbReference>
<dbReference type="InterPro" id="IPR029154">
    <property type="entry name" value="HIBADH-like_NADP-bd"/>
</dbReference>
<dbReference type="InterPro" id="IPR015815">
    <property type="entry name" value="HIBADH-related"/>
</dbReference>
<dbReference type="InterPro" id="IPR036291">
    <property type="entry name" value="NAD(P)-bd_dom_sf"/>
</dbReference>
<dbReference type="PANTHER" id="PTHR43060">
    <property type="entry name" value="3-HYDROXYISOBUTYRATE DEHYDROGENASE-LIKE 1, MITOCHONDRIAL-RELATED"/>
    <property type="match status" value="1"/>
</dbReference>
<dbReference type="PANTHER" id="PTHR43060:SF13">
    <property type="entry name" value="3-HYDROXYISOBUTYRATE DEHYDROGENASE-LIKE 2, MITOCHONDRIAL-RELATED"/>
    <property type="match status" value="1"/>
</dbReference>
<dbReference type="Pfam" id="PF14833">
    <property type="entry name" value="NAD_binding_11"/>
    <property type="match status" value="1"/>
</dbReference>
<dbReference type="Pfam" id="PF03446">
    <property type="entry name" value="NAD_binding_2"/>
    <property type="match status" value="1"/>
</dbReference>
<dbReference type="PIRSF" id="PIRSF000103">
    <property type="entry name" value="HIBADH"/>
    <property type="match status" value="1"/>
</dbReference>
<dbReference type="SUPFAM" id="SSF48179">
    <property type="entry name" value="6-phosphogluconate dehydrogenase C-terminal domain-like"/>
    <property type="match status" value="1"/>
</dbReference>
<dbReference type="SUPFAM" id="SSF51735">
    <property type="entry name" value="NAD(P)-binding Rossmann-fold domains"/>
    <property type="match status" value="1"/>
</dbReference>
<accession>Q949M8</accession>
<accession>Q9C990</accession>
<organism>
    <name type="scientific">Arabidopsis thaliana</name>
    <name type="common">Mouse-ear cress</name>
    <dbReference type="NCBI Taxonomy" id="3702"/>
    <lineage>
        <taxon>Eukaryota</taxon>
        <taxon>Viridiplantae</taxon>
        <taxon>Streptophyta</taxon>
        <taxon>Embryophyta</taxon>
        <taxon>Tracheophyta</taxon>
        <taxon>Spermatophyta</taxon>
        <taxon>Magnoliopsida</taxon>
        <taxon>eudicotyledons</taxon>
        <taxon>Gunneridae</taxon>
        <taxon>Pentapetalae</taxon>
        <taxon>rosids</taxon>
        <taxon>malvids</taxon>
        <taxon>Brassicales</taxon>
        <taxon>Brassicaceae</taxon>
        <taxon>Camelineae</taxon>
        <taxon>Arabidopsis</taxon>
    </lineage>
</organism>
<sequence>MFYQSSSSLTQILHSFCGNTEMETPYPKLIDPSKTRIGWIGIGIMGSAMVSHIIAAGYSVTVYARDLRKTKDLQTKGARIANSPKELAEMSDVVFTIVGNFNDVRSLLLGDDGVLSGLTPGGVTVDMTSSKPGLAREIHAEARRRNCWAVDAPVSGGDAGAREGTLGIFAGGDSEIVEWLSPVMKNIGTVTYMGEAGSGQSCKIGNQIAGASNLVGLAEGIVFAEKAGLDTVKWLEAVKDGAAGSAVMRLFGEMIVKRDYRATGFAEYMVKDLGMAAEAAMPGAALSKQLFTGMVANGDGKLGIQGVVSVIRRLNGIS</sequence>
<keyword id="KW-0101">Branched-chain amino acid catabolism</keyword>
<keyword id="KW-0496">Mitochondrion</keyword>
<keyword id="KW-0520">NAD</keyword>
<keyword id="KW-0560">Oxidoreductase</keyword>
<keyword id="KW-1185">Reference proteome</keyword>